<gene>
    <name evidence="1" type="primary">sucC</name>
    <name type="ordered locus">RT0420</name>
</gene>
<reference key="1">
    <citation type="journal article" date="2004" name="J. Bacteriol.">
        <title>Complete genome sequence of Rickettsia typhi and comparison with sequences of other Rickettsiae.</title>
        <authorList>
            <person name="McLeod M.P."/>
            <person name="Qin X."/>
            <person name="Karpathy S.E."/>
            <person name="Gioia J."/>
            <person name="Highlander S.K."/>
            <person name="Fox G.E."/>
            <person name="McNeill T.Z."/>
            <person name="Jiang H."/>
            <person name="Muzny D."/>
            <person name="Jacob L.S."/>
            <person name="Hawes A.C."/>
            <person name="Sodergren E."/>
            <person name="Gill R."/>
            <person name="Hume J."/>
            <person name="Morgan M."/>
            <person name="Fan G."/>
            <person name="Amin A.G."/>
            <person name="Gibbs R.A."/>
            <person name="Hong C."/>
            <person name="Yu X.-J."/>
            <person name="Walker D.H."/>
            <person name="Weinstock G.M."/>
        </authorList>
    </citation>
    <scope>NUCLEOTIDE SEQUENCE [LARGE SCALE GENOMIC DNA]</scope>
    <source>
        <strain>ATCC VR-144 / Wilmington</strain>
    </source>
</reference>
<protein>
    <recommendedName>
        <fullName evidence="1">Succinate--CoA ligase [ADP-forming] subunit beta</fullName>
        <ecNumber evidence="1">6.2.1.5</ecNumber>
    </recommendedName>
    <alternativeName>
        <fullName evidence="1">Succinyl-CoA synthetase subunit beta</fullName>
        <shortName evidence="1">SCS-beta</shortName>
    </alternativeName>
</protein>
<comment type="function">
    <text evidence="1">Succinyl-CoA synthetase functions in the citric acid cycle (TCA), coupling the hydrolysis of succinyl-CoA to the synthesis of either ATP or GTP and thus represents the only step of substrate-level phosphorylation in the TCA. The beta subunit provides nucleotide specificity of the enzyme and binds the substrate succinate, while the binding sites for coenzyme A and phosphate are found in the alpha subunit.</text>
</comment>
<comment type="catalytic activity">
    <reaction evidence="1">
        <text>succinate + ATP + CoA = succinyl-CoA + ADP + phosphate</text>
        <dbReference type="Rhea" id="RHEA:17661"/>
        <dbReference type="ChEBI" id="CHEBI:30031"/>
        <dbReference type="ChEBI" id="CHEBI:30616"/>
        <dbReference type="ChEBI" id="CHEBI:43474"/>
        <dbReference type="ChEBI" id="CHEBI:57287"/>
        <dbReference type="ChEBI" id="CHEBI:57292"/>
        <dbReference type="ChEBI" id="CHEBI:456216"/>
        <dbReference type="EC" id="6.2.1.5"/>
    </reaction>
    <physiologicalReaction direction="right-to-left" evidence="1">
        <dbReference type="Rhea" id="RHEA:17663"/>
    </physiologicalReaction>
</comment>
<comment type="catalytic activity">
    <reaction evidence="1">
        <text>GTP + succinate + CoA = succinyl-CoA + GDP + phosphate</text>
        <dbReference type="Rhea" id="RHEA:22120"/>
        <dbReference type="ChEBI" id="CHEBI:30031"/>
        <dbReference type="ChEBI" id="CHEBI:37565"/>
        <dbReference type="ChEBI" id="CHEBI:43474"/>
        <dbReference type="ChEBI" id="CHEBI:57287"/>
        <dbReference type="ChEBI" id="CHEBI:57292"/>
        <dbReference type="ChEBI" id="CHEBI:58189"/>
    </reaction>
    <physiologicalReaction direction="right-to-left" evidence="1">
        <dbReference type="Rhea" id="RHEA:22122"/>
    </physiologicalReaction>
</comment>
<comment type="cofactor">
    <cofactor evidence="1">
        <name>Mg(2+)</name>
        <dbReference type="ChEBI" id="CHEBI:18420"/>
    </cofactor>
    <text evidence="1">Binds 1 Mg(2+) ion per subunit.</text>
</comment>
<comment type="pathway">
    <text evidence="1">Carbohydrate metabolism; tricarboxylic acid cycle; succinate from succinyl-CoA (ligase route): step 1/1.</text>
</comment>
<comment type="subunit">
    <text evidence="1">Heterotetramer of two alpha and two beta subunits.</text>
</comment>
<comment type="similarity">
    <text evidence="1">Belongs to the succinate/malate CoA ligase beta subunit family.</text>
</comment>
<accession>Q68WU5</accession>
<keyword id="KW-0067">ATP-binding</keyword>
<keyword id="KW-0436">Ligase</keyword>
<keyword id="KW-0460">Magnesium</keyword>
<keyword id="KW-0479">Metal-binding</keyword>
<keyword id="KW-0547">Nucleotide-binding</keyword>
<keyword id="KW-0816">Tricarboxylic acid cycle</keyword>
<feature type="chain" id="PRO_0000102852" description="Succinate--CoA ligase [ADP-forming] subunit beta">
    <location>
        <begin position="1"/>
        <end position="386"/>
    </location>
</feature>
<feature type="domain" description="ATP-grasp" evidence="1">
    <location>
        <begin position="9"/>
        <end position="244"/>
    </location>
</feature>
<feature type="binding site" evidence="1">
    <location>
        <position position="46"/>
    </location>
    <ligand>
        <name>ATP</name>
        <dbReference type="ChEBI" id="CHEBI:30616"/>
    </ligand>
</feature>
<feature type="binding site" evidence="1">
    <location>
        <begin position="53"/>
        <end position="55"/>
    </location>
    <ligand>
        <name>ATP</name>
        <dbReference type="ChEBI" id="CHEBI:30616"/>
    </ligand>
</feature>
<feature type="binding site" evidence="1">
    <location>
        <position position="99"/>
    </location>
    <ligand>
        <name>ATP</name>
        <dbReference type="ChEBI" id="CHEBI:30616"/>
    </ligand>
</feature>
<feature type="binding site" evidence="1">
    <location>
        <position position="102"/>
    </location>
    <ligand>
        <name>ATP</name>
        <dbReference type="ChEBI" id="CHEBI:30616"/>
    </ligand>
</feature>
<feature type="binding site" evidence="1">
    <location>
        <position position="107"/>
    </location>
    <ligand>
        <name>ATP</name>
        <dbReference type="ChEBI" id="CHEBI:30616"/>
    </ligand>
</feature>
<feature type="binding site" evidence="1">
    <location>
        <position position="199"/>
    </location>
    <ligand>
        <name>Mg(2+)</name>
        <dbReference type="ChEBI" id="CHEBI:18420"/>
    </ligand>
</feature>
<feature type="binding site" evidence="1">
    <location>
        <position position="213"/>
    </location>
    <ligand>
        <name>Mg(2+)</name>
        <dbReference type="ChEBI" id="CHEBI:18420"/>
    </ligand>
</feature>
<feature type="binding site" evidence="1">
    <location>
        <position position="264"/>
    </location>
    <ligand>
        <name>substrate</name>
        <note>ligand shared with subunit alpha</note>
    </ligand>
</feature>
<feature type="binding site" evidence="1">
    <location>
        <begin position="321"/>
        <end position="323"/>
    </location>
    <ligand>
        <name>substrate</name>
        <note>ligand shared with subunit alpha</note>
    </ligand>
</feature>
<organism>
    <name type="scientific">Rickettsia typhi (strain ATCC VR-144 / Wilmington)</name>
    <dbReference type="NCBI Taxonomy" id="257363"/>
    <lineage>
        <taxon>Bacteria</taxon>
        <taxon>Pseudomonadati</taxon>
        <taxon>Pseudomonadota</taxon>
        <taxon>Alphaproteobacteria</taxon>
        <taxon>Rickettsiales</taxon>
        <taxon>Rickettsiaceae</taxon>
        <taxon>Rickettsieae</taxon>
        <taxon>Rickettsia</taxon>
        <taxon>typhus group</taxon>
    </lineage>
</organism>
<dbReference type="EC" id="6.2.1.5" evidence="1"/>
<dbReference type="EMBL" id="AE017197">
    <property type="protein sequence ID" value="AAU03897.1"/>
    <property type="molecule type" value="Genomic_DNA"/>
</dbReference>
<dbReference type="RefSeq" id="WP_011190881.1">
    <property type="nucleotide sequence ID" value="NC_006142.1"/>
</dbReference>
<dbReference type="SMR" id="Q68WU5"/>
<dbReference type="KEGG" id="rty:RT0420"/>
<dbReference type="eggNOG" id="COG0045">
    <property type="taxonomic scope" value="Bacteria"/>
</dbReference>
<dbReference type="HOGENOM" id="CLU_037430_0_2_5"/>
<dbReference type="OrthoDB" id="9802602at2"/>
<dbReference type="UniPathway" id="UPA00223">
    <property type="reaction ID" value="UER00999"/>
</dbReference>
<dbReference type="Proteomes" id="UP000000604">
    <property type="component" value="Chromosome"/>
</dbReference>
<dbReference type="GO" id="GO:0005829">
    <property type="term" value="C:cytosol"/>
    <property type="evidence" value="ECO:0007669"/>
    <property type="project" value="TreeGrafter"/>
</dbReference>
<dbReference type="GO" id="GO:0042709">
    <property type="term" value="C:succinate-CoA ligase complex"/>
    <property type="evidence" value="ECO:0007669"/>
    <property type="project" value="TreeGrafter"/>
</dbReference>
<dbReference type="GO" id="GO:0005524">
    <property type="term" value="F:ATP binding"/>
    <property type="evidence" value="ECO:0007669"/>
    <property type="project" value="UniProtKB-UniRule"/>
</dbReference>
<dbReference type="GO" id="GO:0000287">
    <property type="term" value="F:magnesium ion binding"/>
    <property type="evidence" value="ECO:0007669"/>
    <property type="project" value="UniProtKB-UniRule"/>
</dbReference>
<dbReference type="GO" id="GO:0004775">
    <property type="term" value="F:succinate-CoA ligase (ADP-forming) activity"/>
    <property type="evidence" value="ECO:0007669"/>
    <property type="project" value="UniProtKB-UniRule"/>
</dbReference>
<dbReference type="GO" id="GO:0004776">
    <property type="term" value="F:succinate-CoA ligase (GDP-forming) activity"/>
    <property type="evidence" value="ECO:0007669"/>
    <property type="project" value="RHEA"/>
</dbReference>
<dbReference type="GO" id="GO:0006104">
    <property type="term" value="P:succinyl-CoA metabolic process"/>
    <property type="evidence" value="ECO:0007669"/>
    <property type="project" value="TreeGrafter"/>
</dbReference>
<dbReference type="GO" id="GO:0006099">
    <property type="term" value="P:tricarboxylic acid cycle"/>
    <property type="evidence" value="ECO:0007669"/>
    <property type="project" value="UniProtKB-UniRule"/>
</dbReference>
<dbReference type="FunFam" id="3.30.1490.20:FF:000002">
    <property type="entry name" value="Succinate--CoA ligase [ADP-forming] subunit beta"/>
    <property type="match status" value="1"/>
</dbReference>
<dbReference type="FunFam" id="3.30.470.20:FF:000002">
    <property type="entry name" value="Succinate--CoA ligase [ADP-forming] subunit beta"/>
    <property type="match status" value="1"/>
</dbReference>
<dbReference type="FunFam" id="3.40.50.261:FF:000001">
    <property type="entry name" value="Succinate--CoA ligase [ADP-forming] subunit beta"/>
    <property type="match status" value="1"/>
</dbReference>
<dbReference type="Gene3D" id="3.30.1490.20">
    <property type="entry name" value="ATP-grasp fold, A domain"/>
    <property type="match status" value="1"/>
</dbReference>
<dbReference type="Gene3D" id="3.30.470.20">
    <property type="entry name" value="ATP-grasp fold, B domain"/>
    <property type="match status" value="1"/>
</dbReference>
<dbReference type="Gene3D" id="3.40.50.261">
    <property type="entry name" value="Succinyl-CoA synthetase domains"/>
    <property type="match status" value="1"/>
</dbReference>
<dbReference type="HAMAP" id="MF_00558">
    <property type="entry name" value="Succ_CoA_beta"/>
    <property type="match status" value="1"/>
</dbReference>
<dbReference type="InterPro" id="IPR011761">
    <property type="entry name" value="ATP-grasp"/>
</dbReference>
<dbReference type="InterPro" id="IPR013650">
    <property type="entry name" value="ATP-grasp_succ-CoA_synth-type"/>
</dbReference>
<dbReference type="InterPro" id="IPR013815">
    <property type="entry name" value="ATP_grasp_subdomain_1"/>
</dbReference>
<dbReference type="InterPro" id="IPR017866">
    <property type="entry name" value="Succ-CoA_synthase_bsu_CS"/>
</dbReference>
<dbReference type="InterPro" id="IPR005811">
    <property type="entry name" value="SUCC_ACL_C"/>
</dbReference>
<dbReference type="InterPro" id="IPR005809">
    <property type="entry name" value="Succ_CoA_ligase-like_bsu"/>
</dbReference>
<dbReference type="InterPro" id="IPR016102">
    <property type="entry name" value="Succinyl-CoA_synth-like"/>
</dbReference>
<dbReference type="NCBIfam" id="NF001913">
    <property type="entry name" value="PRK00696.1"/>
    <property type="match status" value="1"/>
</dbReference>
<dbReference type="NCBIfam" id="TIGR01016">
    <property type="entry name" value="sucCoAbeta"/>
    <property type="match status" value="1"/>
</dbReference>
<dbReference type="PANTHER" id="PTHR11815:SF10">
    <property type="entry name" value="SUCCINATE--COA LIGASE [GDP-FORMING] SUBUNIT BETA, MITOCHONDRIAL"/>
    <property type="match status" value="1"/>
</dbReference>
<dbReference type="PANTHER" id="PTHR11815">
    <property type="entry name" value="SUCCINYL-COA SYNTHETASE BETA CHAIN"/>
    <property type="match status" value="1"/>
</dbReference>
<dbReference type="Pfam" id="PF08442">
    <property type="entry name" value="ATP-grasp_2"/>
    <property type="match status" value="1"/>
</dbReference>
<dbReference type="Pfam" id="PF00549">
    <property type="entry name" value="Ligase_CoA"/>
    <property type="match status" value="1"/>
</dbReference>
<dbReference type="PIRSF" id="PIRSF001554">
    <property type="entry name" value="SucCS_beta"/>
    <property type="match status" value="1"/>
</dbReference>
<dbReference type="SUPFAM" id="SSF56059">
    <property type="entry name" value="Glutathione synthetase ATP-binding domain-like"/>
    <property type="match status" value="1"/>
</dbReference>
<dbReference type="SUPFAM" id="SSF52210">
    <property type="entry name" value="Succinyl-CoA synthetase domains"/>
    <property type="match status" value="1"/>
</dbReference>
<dbReference type="PROSITE" id="PS50975">
    <property type="entry name" value="ATP_GRASP"/>
    <property type="match status" value="1"/>
</dbReference>
<dbReference type="PROSITE" id="PS01217">
    <property type="entry name" value="SUCCINYL_COA_LIG_3"/>
    <property type="match status" value="1"/>
</dbReference>
<evidence type="ECO:0000255" key="1">
    <source>
        <dbReference type="HAMAP-Rule" id="MF_00558"/>
    </source>
</evidence>
<name>SUCC_RICTY</name>
<proteinExistence type="inferred from homology"/>
<sequence>MNIHEYQAKEILRKYGVPTSTGLVVTKTEKINEAIDKLNTKVYVVKAQIHAGGRGKAGGVKVVKSKEEAKKVAHDMFGINLVTHQTGPQGQKVNHLYIESGCDILKEYYFSIVFDRSASCITFIASTEGGVDIEAVAEKMPEKIIKFAVDPATGLQDFHMRGIAYGLGFKDSQAKQMKEIVKSVYNAFIETDATQIEINPLIINSYKNLLALDAKITFDDNGLFKHPNITAMRDHDEEDPLETRAANAGLSYVKMDGNIGCMVNGAGLAMATMDIIKLYGASPANFLDVGGGADRERVKEALKIILSDKEVKGILVNIFGGIMRCDIIAEGIIAAARDIGITVPLVVRLAGTNVEKGKEILSNSNLKIIPAHDLADAANKIVEAIR</sequence>